<keyword id="KW-0413">Isomerase</keyword>
<keyword id="KW-1185">Reference proteome</keyword>
<keyword id="KW-0819">tRNA processing</keyword>
<name>TRUB_CORDI</name>
<gene>
    <name evidence="1" type="primary">truB</name>
    <name type="ordered locus">DIP1471</name>
</gene>
<feature type="chain" id="PRO_0000121823" description="tRNA pseudouridine synthase B">
    <location>
        <begin position="1"/>
        <end position="300"/>
    </location>
</feature>
<feature type="active site" description="Nucleophile" evidence="1">
    <location>
        <position position="44"/>
    </location>
</feature>
<reference key="1">
    <citation type="journal article" date="2003" name="Nucleic Acids Res.">
        <title>The complete genome sequence and analysis of Corynebacterium diphtheriae NCTC13129.</title>
        <authorList>
            <person name="Cerdeno-Tarraga A.-M."/>
            <person name="Efstratiou A."/>
            <person name="Dover L.G."/>
            <person name="Holden M.T.G."/>
            <person name="Pallen M.J."/>
            <person name="Bentley S.D."/>
            <person name="Besra G.S."/>
            <person name="Churcher C.M."/>
            <person name="James K.D."/>
            <person name="De Zoysa A."/>
            <person name="Chillingworth T."/>
            <person name="Cronin A."/>
            <person name="Dowd L."/>
            <person name="Feltwell T."/>
            <person name="Hamlin N."/>
            <person name="Holroyd S."/>
            <person name="Jagels K."/>
            <person name="Moule S."/>
            <person name="Quail M.A."/>
            <person name="Rabbinowitsch E."/>
            <person name="Rutherford K.M."/>
            <person name="Thomson N.R."/>
            <person name="Unwin L."/>
            <person name="Whitehead S."/>
            <person name="Barrell B.G."/>
            <person name="Parkhill J."/>
        </authorList>
    </citation>
    <scope>NUCLEOTIDE SEQUENCE [LARGE SCALE GENOMIC DNA]</scope>
    <source>
        <strain>ATCC 700971 / NCTC 13129 / Biotype gravis</strain>
    </source>
</reference>
<proteinExistence type="inferred from homology"/>
<accession>P60343</accession>
<protein>
    <recommendedName>
        <fullName evidence="1">tRNA pseudouridine synthase B</fullName>
        <ecNumber evidence="1">5.4.99.25</ecNumber>
    </recommendedName>
    <alternativeName>
        <fullName evidence="1">tRNA pseudouridine(55) synthase</fullName>
        <shortName evidence="1">Psi55 synthase</shortName>
    </alternativeName>
    <alternativeName>
        <fullName evidence="1">tRNA pseudouridylate synthase</fullName>
    </alternativeName>
    <alternativeName>
        <fullName evidence="1">tRNA-uridine isomerase</fullName>
    </alternativeName>
</protein>
<dbReference type="EC" id="5.4.99.25" evidence="1"/>
<dbReference type="EMBL" id="BX248358">
    <property type="protein sequence ID" value="CAE49999.1"/>
    <property type="molecule type" value="Genomic_DNA"/>
</dbReference>
<dbReference type="RefSeq" id="WP_010935089.1">
    <property type="nucleotide sequence ID" value="NC_002935.2"/>
</dbReference>
<dbReference type="SMR" id="P60343"/>
<dbReference type="STRING" id="257309.DIP1471"/>
<dbReference type="KEGG" id="cdi:DIP1471"/>
<dbReference type="HOGENOM" id="CLU_032087_0_0_11"/>
<dbReference type="Proteomes" id="UP000002198">
    <property type="component" value="Chromosome"/>
</dbReference>
<dbReference type="GO" id="GO:0003723">
    <property type="term" value="F:RNA binding"/>
    <property type="evidence" value="ECO:0007669"/>
    <property type="project" value="InterPro"/>
</dbReference>
<dbReference type="GO" id="GO:0160148">
    <property type="term" value="F:tRNA pseudouridine(55) synthase activity"/>
    <property type="evidence" value="ECO:0007669"/>
    <property type="project" value="UniProtKB-EC"/>
</dbReference>
<dbReference type="GO" id="GO:1990481">
    <property type="term" value="P:mRNA pseudouridine synthesis"/>
    <property type="evidence" value="ECO:0007669"/>
    <property type="project" value="TreeGrafter"/>
</dbReference>
<dbReference type="GO" id="GO:0031119">
    <property type="term" value="P:tRNA pseudouridine synthesis"/>
    <property type="evidence" value="ECO:0007669"/>
    <property type="project" value="UniProtKB-UniRule"/>
</dbReference>
<dbReference type="CDD" id="cd02573">
    <property type="entry name" value="PseudoU_synth_EcTruB"/>
    <property type="match status" value="1"/>
</dbReference>
<dbReference type="FunFam" id="3.30.2350.10:FF:000011">
    <property type="entry name" value="tRNA pseudouridine synthase B"/>
    <property type="match status" value="1"/>
</dbReference>
<dbReference type="Gene3D" id="3.30.2350.10">
    <property type="entry name" value="Pseudouridine synthase"/>
    <property type="match status" value="1"/>
</dbReference>
<dbReference type="Gene3D" id="2.30.130.10">
    <property type="entry name" value="PUA domain"/>
    <property type="match status" value="1"/>
</dbReference>
<dbReference type="HAMAP" id="MF_01080">
    <property type="entry name" value="TruB_bact"/>
    <property type="match status" value="1"/>
</dbReference>
<dbReference type="InterPro" id="IPR020103">
    <property type="entry name" value="PsdUridine_synth_cat_dom_sf"/>
</dbReference>
<dbReference type="InterPro" id="IPR002501">
    <property type="entry name" value="PsdUridine_synth_N"/>
</dbReference>
<dbReference type="InterPro" id="IPR015947">
    <property type="entry name" value="PUA-like_sf"/>
</dbReference>
<dbReference type="InterPro" id="IPR036974">
    <property type="entry name" value="PUA_sf"/>
</dbReference>
<dbReference type="InterPro" id="IPR015225">
    <property type="entry name" value="tRNA_psdUridine_synth_fam2_C"/>
</dbReference>
<dbReference type="InterPro" id="IPR014780">
    <property type="entry name" value="tRNA_psdUridine_synth_TruB"/>
</dbReference>
<dbReference type="InterPro" id="IPR032819">
    <property type="entry name" value="TruB_C"/>
</dbReference>
<dbReference type="NCBIfam" id="TIGR00431">
    <property type="entry name" value="TruB"/>
    <property type="match status" value="1"/>
</dbReference>
<dbReference type="PANTHER" id="PTHR13767:SF2">
    <property type="entry name" value="PSEUDOURIDYLATE SYNTHASE TRUB1"/>
    <property type="match status" value="1"/>
</dbReference>
<dbReference type="PANTHER" id="PTHR13767">
    <property type="entry name" value="TRNA-PSEUDOURIDINE SYNTHASE"/>
    <property type="match status" value="1"/>
</dbReference>
<dbReference type="Pfam" id="PF09142">
    <property type="entry name" value="TruB_C"/>
    <property type="match status" value="1"/>
</dbReference>
<dbReference type="Pfam" id="PF16198">
    <property type="entry name" value="TruB_C_2"/>
    <property type="match status" value="1"/>
</dbReference>
<dbReference type="Pfam" id="PF01509">
    <property type="entry name" value="TruB_N"/>
    <property type="match status" value="1"/>
</dbReference>
<dbReference type="SUPFAM" id="SSF55120">
    <property type="entry name" value="Pseudouridine synthase"/>
    <property type="match status" value="1"/>
</dbReference>
<dbReference type="SUPFAM" id="SSF88697">
    <property type="entry name" value="PUA domain-like"/>
    <property type="match status" value="1"/>
</dbReference>
<organism>
    <name type="scientific">Corynebacterium diphtheriae (strain ATCC 700971 / NCTC 13129 / Biotype gravis)</name>
    <dbReference type="NCBI Taxonomy" id="257309"/>
    <lineage>
        <taxon>Bacteria</taxon>
        <taxon>Bacillati</taxon>
        <taxon>Actinomycetota</taxon>
        <taxon>Actinomycetes</taxon>
        <taxon>Mycobacteriales</taxon>
        <taxon>Corynebacteriaceae</taxon>
        <taxon>Corynebacterium</taxon>
    </lineage>
</organism>
<sequence length="300" mass="32242">MNDALADSGLVIVDKPQGMTSHDVVSKIRRTFSTKKVGHAGTLDPMATGVLVLGLERGTKFLAHMVASTKSYTATIRLGAATTTDDREGETITSASPDQLAGITETKISDAVKQFRGSIMQRPAAVSAIKIDGKRAHQRVREGEKVEIPARPVTISRYDILEIRRDAAFIDIDVEVDCSSGTYIRSLARDLGEELGVGGHLTALRRTQVGPFTLDNAVTLEKLEENPHVSLTLDQALAASYPVLSVSEKEASDLAMGKWLTPRGLKGIHAAVDPHGRAIALVKEQGKRLATIFVARPSTL</sequence>
<comment type="function">
    <text evidence="1">Responsible for synthesis of pseudouridine from uracil-55 in the psi GC loop of transfer RNAs.</text>
</comment>
<comment type="catalytic activity">
    <reaction evidence="1">
        <text>uridine(55) in tRNA = pseudouridine(55) in tRNA</text>
        <dbReference type="Rhea" id="RHEA:42532"/>
        <dbReference type="Rhea" id="RHEA-COMP:10101"/>
        <dbReference type="Rhea" id="RHEA-COMP:10102"/>
        <dbReference type="ChEBI" id="CHEBI:65314"/>
        <dbReference type="ChEBI" id="CHEBI:65315"/>
        <dbReference type="EC" id="5.4.99.25"/>
    </reaction>
</comment>
<comment type="similarity">
    <text evidence="1">Belongs to the pseudouridine synthase TruB family. Type 1 subfamily.</text>
</comment>
<evidence type="ECO:0000255" key="1">
    <source>
        <dbReference type="HAMAP-Rule" id="MF_01080"/>
    </source>
</evidence>